<accession>Q71YI4</accession>
<dbReference type="EC" id="4.1.1.23" evidence="1"/>
<dbReference type="EMBL" id="AE017262">
    <property type="protein sequence ID" value="AAT04630.1"/>
    <property type="molecule type" value="Genomic_DNA"/>
</dbReference>
<dbReference type="RefSeq" id="WP_003725664.1">
    <property type="nucleotide sequence ID" value="NC_002973.6"/>
</dbReference>
<dbReference type="SMR" id="Q71YI4"/>
<dbReference type="KEGG" id="lmf:LMOf2365_1860"/>
<dbReference type="HOGENOM" id="CLU_067069_1_1_9"/>
<dbReference type="UniPathway" id="UPA00070">
    <property type="reaction ID" value="UER00120"/>
</dbReference>
<dbReference type="GO" id="GO:0005829">
    <property type="term" value="C:cytosol"/>
    <property type="evidence" value="ECO:0007669"/>
    <property type="project" value="TreeGrafter"/>
</dbReference>
<dbReference type="GO" id="GO:0004590">
    <property type="term" value="F:orotidine-5'-phosphate decarboxylase activity"/>
    <property type="evidence" value="ECO:0007669"/>
    <property type="project" value="UniProtKB-UniRule"/>
</dbReference>
<dbReference type="GO" id="GO:0006207">
    <property type="term" value="P:'de novo' pyrimidine nucleobase biosynthetic process"/>
    <property type="evidence" value="ECO:0007669"/>
    <property type="project" value="InterPro"/>
</dbReference>
<dbReference type="GO" id="GO:0044205">
    <property type="term" value="P:'de novo' UMP biosynthetic process"/>
    <property type="evidence" value="ECO:0007669"/>
    <property type="project" value="UniProtKB-UniRule"/>
</dbReference>
<dbReference type="CDD" id="cd04725">
    <property type="entry name" value="OMP_decarboxylase_like"/>
    <property type="match status" value="1"/>
</dbReference>
<dbReference type="FunFam" id="3.20.20.70:FF:000015">
    <property type="entry name" value="Orotidine 5'-phosphate decarboxylase"/>
    <property type="match status" value="1"/>
</dbReference>
<dbReference type="Gene3D" id="3.20.20.70">
    <property type="entry name" value="Aldolase class I"/>
    <property type="match status" value="1"/>
</dbReference>
<dbReference type="HAMAP" id="MF_01200_B">
    <property type="entry name" value="OMPdecase_type1_B"/>
    <property type="match status" value="1"/>
</dbReference>
<dbReference type="InterPro" id="IPR013785">
    <property type="entry name" value="Aldolase_TIM"/>
</dbReference>
<dbReference type="InterPro" id="IPR014732">
    <property type="entry name" value="OMPdecase"/>
</dbReference>
<dbReference type="InterPro" id="IPR018089">
    <property type="entry name" value="OMPdecase_AS"/>
</dbReference>
<dbReference type="InterPro" id="IPR047596">
    <property type="entry name" value="OMPdecase_bac"/>
</dbReference>
<dbReference type="InterPro" id="IPR001754">
    <property type="entry name" value="OMPdeCOase_dom"/>
</dbReference>
<dbReference type="InterPro" id="IPR011060">
    <property type="entry name" value="RibuloseP-bd_barrel"/>
</dbReference>
<dbReference type="NCBIfam" id="NF001273">
    <property type="entry name" value="PRK00230.1"/>
    <property type="match status" value="1"/>
</dbReference>
<dbReference type="NCBIfam" id="TIGR01740">
    <property type="entry name" value="pyrF"/>
    <property type="match status" value="1"/>
</dbReference>
<dbReference type="PANTHER" id="PTHR32119">
    <property type="entry name" value="OROTIDINE 5'-PHOSPHATE DECARBOXYLASE"/>
    <property type="match status" value="1"/>
</dbReference>
<dbReference type="PANTHER" id="PTHR32119:SF2">
    <property type="entry name" value="OROTIDINE 5'-PHOSPHATE DECARBOXYLASE"/>
    <property type="match status" value="1"/>
</dbReference>
<dbReference type="Pfam" id="PF00215">
    <property type="entry name" value="OMPdecase"/>
    <property type="match status" value="1"/>
</dbReference>
<dbReference type="SMART" id="SM00934">
    <property type="entry name" value="OMPdecase"/>
    <property type="match status" value="1"/>
</dbReference>
<dbReference type="SUPFAM" id="SSF51366">
    <property type="entry name" value="Ribulose-phoshate binding barrel"/>
    <property type="match status" value="1"/>
</dbReference>
<dbReference type="PROSITE" id="PS00156">
    <property type="entry name" value="OMPDECASE"/>
    <property type="match status" value="1"/>
</dbReference>
<sequence>MNKPIIALDFQTYEEVETFLAKFSGETLSVKVGMELFYSNGPIIVEKIKQQHHEIFLDLKLHDIPNTVKSAMIGLAKLGVDMVNVHAAGGKKMMEAAREGLEIGSSSGKRPKIIAVTQLTSTSETDMQTEQLIKTSLLESVMHYSNLSKQAGLDGVVCSALEAEDIKQQNGADFLRVTPGIRLASDAADDQIRVVTPEKARLIGSSNIVVGRSITRANDPVEAYNQVLKEWNA</sequence>
<keyword id="KW-0210">Decarboxylase</keyword>
<keyword id="KW-0456">Lyase</keyword>
<keyword id="KW-0665">Pyrimidine biosynthesis</keyword>
<name>PYRF_LISMF</name>
<comment type="function">
    <text evidence="1">Catalyzes the decarboxylation of orotidine 5'-monophosphate (OMP) to uridine 5'-monophosphate (UMP).</text>
</comment>
<comment type="catalytic activity">
    <reaction evidence="1">
        <text>orotidine 5'-phosphate + H(+) = UMP + CO2</text>
        <dbReference type="Rhea" id="RHEA:11596"/>
        <dbReference type="ChEBI" id="CHEBI:15378"/>
        <dbReference type="ChEBI" id="CHEBI:16526"/>
        <dbReference type="ChEBI" id="CHEBI:57538"/>
        <dbReference type="ChEBI" id="CHEBI:57865"/>
        <dbReference type="EC" id="4.1.1.23"/>
    </reaction>
</comment>
<comment type="pathway">
    <text evidence="1">Pyrimidine metabolism; UMP biosynthesis via de novo pathway; UMP from orotate: step 2/2.</text>
</comment>
<comment type="subunit">
    <text evidence="1">Homodimer.</text>
</comment>
<comment type="similarity">
    <text evidence="1">Belongs to the OMP decarboxylase family. Type 1 subfamily.</text>
</comment>
<reference key="1">
    <citation type="journal article" date="2004" name="Nucleic Acids Res.">
        <title>Whole genome comparisons of serotype 4b and 1/2a strains of the food-borne pathogen Listeria monocytogenes reveal new insights into the core genome components of this species.</title>
        <authorList>
            <person name="Nelson K.E."/>
            <person name="Fouts D.E."/>
            <person name="Mongodin E.F."/>
            <person name="Ravel J."/>
            <person name="DeBoy R.T."/>
            <person name="Kolonay J.F."/>
            <person name="Rasko D.A."/>
            <person name="Angiuoli S.V."/>
            <person name="Gill S.R."/>
            <person name="Paulsen I.T."/>
            <person name="Peterson J.D."/>
            <person name="White O."/>
            <person name="Nelson W.C."/>
            <person name="Nierman W.C."/>
            <person name="Beanan M.J."/>
            <person name="Brinkac L.M."/>
            <person name="Daugherty S.C."/>
            <person name="Dodson R.J."/>
            <person name="Durkin A.S."/>
            <person name="Madupu R."/>
            <person name="Haft D.H."/>
            <person name="Selengut J."/>
            <person name="Van Aken S.E."/>
            <person name="Khouri H.M."/>
            <person name="Fedorova N."/>
            <person name="Forberger H.A."/>
            <person name="Tran B."/>
            <person name="Kathariou S."/>
            <person name="Wonderling L.D."/>
            <person name="Uhlich G.A."/>
            <person name="Bayles D.O."/>
            <person name="Luchansky J.B."/>
            <person name="Fraser C.M."/>
        </authorList>
    </citation>
    <scope>NUCLEOTIDE SEQUENCE [LARGE SCALE GENOMIC DNA]</scope>
    <source>
        <strain>F2365</strain>
    </source>
</reference>
<protein>
    <recommendedName>
        <fullName evidence="1">Orotidine 5'-phosphate decarboxylase</fullName>
        <ecNumber evidence="1">4.1.1.23</ecNumber>
    </recommendedName>
    <alternativeName>
        <fullName evidence="1">OMP decarboxylase</fullName>
        <shortName evidence="1">OMPDCase</shortName>
        <shortName evidence="1">OMPdecase</shortName>
    </alternativeName>
</protein>
<evidence type="ECO:0000255" key="1">
    <source>
        <dbReference type="HAMAP-Rule" id="MF_01200"/>
    </source>
</evidence>
<feature type="chain" id="PRO_0000134553" description="Orotidine 5'-phosphate decarboxylase">
    <location>
        <begin position="1"/>
        <end position="233"/>
    </location>
</feature>
<feature type="active site" description="Proton donor" evidence="1">
    <location>
        <position position="60"/>
    </location>
</feature>
<feature type="binding site" evidence="1">
    <location>
        <position position="9"/>
    </location>
    <ligand>
        <name>substrate</name>
    </ligand>
</feature>
<feature type="binding site" evidence="1">
    <location>
        <position position="31"/>
    </location>
    <ligand>
        <name>substrate</name>
    </ligand>
</feature>
<feature type="binding site" evidence="1">
    <location>
        <begin position="58"/>
        <end position="67"/>
    </location>
    <ligand>
        <name>substrate</name>
    </ligand>
</feature>
<feature type="binding site" evidence="1">
    <location>
        <position position="120"/>
    </location>
    <ligand>
        <name>substrate</name>
    </ligand>
</feature>
<feature type="binding site" evidence="1">
    <location>
        <position position="182"/>
    </location>
    <ligand>
        <name>substrate</name>
    </ligand>
</feature>
<feature type="binding site" evidence="1">
    <location>
        <position position="191"/>
    </location>
    <ligand>
        <name>substrate</name>
    </ligand>
</feature>
<feature type="binding site" evidence="1">
    <location>
        <position position="211"/>
    </location>
    <ligand>
        <name>substrate</name>
    </ligand>
</feature>
<feature type="binding site" evidence="1">
    <location>
        <position position="212"/>
    </location>
    <ligand>
        <name>substrate</name>
    </ligand>
</feature>
<proteinExistence type="inferred from homology"/>
<gene>
    <name evidence="1" type="primary">pyrF</name>
    <name type="ordered locus">LMOf2365_1860</name>
</gene>
<organism>
    <name type="scientific">Listeria monocytogenes serotype 4b (strain F2365)</name>
    <dbReference type="NCBI Taxonomy" id="265669"/>
    <lineage>
        <taxon>Bacteria</taxon>
        <taxon>Bacillati</taxon>
        <taxon>Bacillota</taxon>
        <taxon>Bacilli</taxon>
        <taxon>Bacillales</taxon>
        <taxon>Listeriaceae</taxon>
        <taxon>Listeria</taxon>
    </lineage>
</organism>